<comment type="function">
    <text evidence="1">Co-chaperone that stimulates HSP90 ATPase activity.</text>
</comment>
<comment type="similarity">
    <text evidence="2">Belongs to the AHA1 family.</text>
</comment>
<dbReference type="EMBL" id="BC149756">
    <property type="protein sequence ID" value="AAI49757.1"/>
    <property type="molecule type" value="mRNA"/>
</dbReference>
<dbReference type="RefSeq" id="NP_001095604.1">
    <property type="nucleotide sequence ID" value="NM_001102134.1"/>
</dbReference>
<dbReference type="SMR" id="A6QQC0"/>
<dbReference type="FunCoup" id="A6QQC0">
    <property type="interactions" value="2196"/>
</dbReference>
<dbReference type="STRING" id="9913.ENSBTAP00000050140"/>
<dbReference type="PaxDb" id="9913-ENSBTAP00000050140"/>
<dbReference type="GeneID" id="531017"/>
<dbReference type="KEGG" id="bta:531017"/>
<dbReference type="CTD" id="268390"/>
<dbReference type="VEuPathDB" id="HostDB:ENSBTAG00000006025"/>
<dbReference type="eggNOG" id="KOG2936">
    <property type="taxonomic scope" value="Eukaryota"/>
</dbReference>
<dbReference type="HOGENOM" id="CLU_049046_0_0_1"/>
<dbReference type="InParanoid" id="A6QQC0"/>
<dbReference type="OMA" id="FLYEWNI"/>
<dbReference type="OrthoDB" id="567237at2759"/>
<dbReference type="TreeFam" id="TF313680"/>
<dbReference type="Proteomes" id="UP000009136">
    <property type="component" value="Chromosome 11"/>
</dbReference>
<dbReference type="Bgee" id="ENSBTAG00000006025">
    <property type="expression patterns" value="Expressed in oocyte and 105 other cell types or tissues"/>
</dbReference>
<dbReference type="GO" id="GO:0005829">
    <property type="term" value="C:cytosol"/>
    <property type="evidence" value="ECO:0000318"/>
    <property type="project" value="GO_Central"/>
</dbReference>
<dbReference type="GO" id="GO:0001671">
    <property type="term" value="F:ATPase activator activity"/>
    <property type="evidence" value="ECO:0000318"/>
    <property type="project" value="GO_Central"/>
</dbReference>
<dbReference type="GO" id="GO:0051087">
    <property type="term" value="F:protein-folding chaperone binding"/>
    <property type="evidence" value="ECO:0007669"/>
    <property type="project" value="InterPro"/>
</dbReference>
<dbReference type="GO" id="GO:0006457">
    <property type="term" value="P:protein folding"/>
    <property type="evidence" value="ECO:0000318"/>
    <property type="project" value="GO_Central"/>
</dbReference>
<dbReference type="Gene3D" id="3.30.530.20">
    <property type="match status" value="1"/>
</dbReference>
<dbReference type="Gene3D" id="3.15.10.20">
    <property type="entry name" value="Activator of Hsp90 ATPase Aha1, N-terminal domain"/>
    <property type="match status" value="1"/>
</dbReference>
<dbReference type="InterPro" id="IPR036338">
    <property type="entry name" value="Aha1"/>
</dbReference>
<dbReference type="InterPro" id="IPR015310">
    <property type="entry name" value="AHSA1-like_N"/>
</dbReference>
<dbReference type="InterPro" id="IPR023393">
    <property type="entry name" value="START-like_dom_sf"/>
</dbReference>
<dbReference type="PANTHER" id="PTHR13009:SF4">
    <property type="entry name" value="ACTIVATOR OF 90 KDA HEAT SHOCK PROTEIN ATPASE HOMOLOG 2-RELATED"/>
    <property type="match status" value="1"/>
</dbReference>
<dbReference type="PANTHER" id="PTHR13009">
    <property type="entry name" value="HEAT SHOCK PROTEIN 90 HSP90 CO-CHAPERONE AHA-1"/>
    <property type="match status" value="1"/>
</dbReference>
<dbReference type="Pfam" id="PF09229">
    <property type="entry name" value="Aha1_N"/>
    <property type="match status" value="1"/>
</dbReference>
<dbReference type="SMART" id="SM01000">
    <property type="entry name" value="Aha1_N"/>
    <property type="match status" value="1"/>
</dbReference>
<dbReference type="SUPFAM" id="SSF103111">
    <property type="entry name" value="Activator of Hsp90 ATPase, Aha1"/>
    <property type="match status" value="1"/>
</dbReference>
<sequence length="260" mass="29190">MAKWGQGDPRWIVEEREDGTNVNNWHWTERDATSWSKGRLRELLVGITVENEAGRCEISELKQVEGEASCSSRKGKLIFFYEWNIKLGWKGIIRESGAKHKGLIEIPSLSEENEVDDTEVNVSKKKGDGDILKDLMKTAGTAKVREALGDYLKALKTEFTMGMILPTKAMAAQELTVERKLSENALQIQASSRVALGVRIPTVALHMTELFDTAIEQLYRIFTVKDLVQKFSKSPAVLEAEKGGKFQMLMETSPVNIQNC</sequence>
<reference key="1">
    <citation type="submission" date="2007-07" db="EMBL/GenBank/DDBJ databases">
        <authorList>
            <consortium name="NIH - Mammalian Gene Collection (MGC) project"/>
        </authorList>
    </citation>
    <scope>NUCLEOTIDE SEQUENCE [LARGE SCALE MRNA]</scope>
    <source>
        <strain>Hereford</strain>
        <tissue>Thymus</tissue>
    </source>
</reference>
<protein>
    <recommendedName>
        <fullName>Activator of 90 kDa heat shock protein ATPase homolog 2</fullName>
    </recommendedName>
</protein>
<evidence type="ECO:0000250" key="1">
    <source>
        <dbReference type="UniProtKB" id="Q12449"/>
    </source>
</evidence>
<evidence type="ECO:0000305" key="2"/>
<proteinExistence type="evidence at transcript level"/>
<keyword id="KW-0143">Chaperone</keyword>
<keyword id="KW-1185">Reference proteome</keyword>
<keyword id="KW-0346">Stress response</keyword>
<gene>
    <name type="primary">AHSA2</name>
</gene>
<feature type="chain" id="PRO_0000315604" description="Activator of 90 kDa heat shock protein ATPase homolog 2">
    <location>
        <begin position="1"/>
        <end position="260"/>
    </location>
</feature>
<organism>
    <name type="scientific">Bos taurus</name>
    <name type="common">Bovine</name>
    <dbReference type="NCBI Taxonomy" id="9913"/>
    <lineage>
        <taxon>Eukaryota</taxon>
        <taxon>Metazoa</taxon>
        <taxon>Chordata</taxon>
        <taxon>Craniata</taxon>
        <taxon>Vertebrata</taxon>
        <taxon>Euteleostomi</taxon>
        <taxon>Mammalia</taxon>
        <taxon>Eutheria</taxon>
        <taxon>Laurasiatheria</taxon>
        <taxon>Artiodactyla</taxon>
        <taxon>Ruminantia</taxon>
        <taxon>Pecora</taxon>
        <taxon>Bovidae</taxon>
        <taxon>Bovinae</taxon>
        <taxon>Bos</taxon>
    </lineage>
</organism>
<name>AHSA2_BOVIN</name>
<accession>A6QQC0</accession>